<dbReference type="EC" id="2.1.1.148" evidence="1"/>
<dbReference type="EMBL" id="CP000716">
    <property type="protein sequence ID" value="ABR31741.1"/>
    <property type="molecule type" value="Genomic_DNA"/>
</dbReference>
<dbReference type="RefSeq" id="WP_012058099.1">
    <property type="nucleotide sequence ID" value="NC_009616.1"/>
</dbReference>
<dbReference type="SMR" id="A6LP90"/>
<dbReference type="STRING" id="391009.Tmel_1909"/>
<dbReference type="KEGG" id="tme:Tmel_1909"/>
<dbReference type="eggNOG" id="COG1351">
    <property type="taxonomic scope" value="Bacteria"/>
</dbReference>
<dbReference type="HOGENOM" id="CLU_067790_0_0_0"/>
<dbReference type="OrthoDB" id="9774464at2"/>
<dbReference type="UniPathway" id="UPA00575"/>
<dbReference type="Proteomes" id="UP000001110">
    <property type="component" value="Chromosome"/>
</dbReference>
<dbReference type="GO" id="GO:0050660">
    <property type="term" value="F:flavin adenine dinucleotide binding"/>
    <property type="evidence" value="ECO:0007669"/>
    <property type="project" value="InterPro"/>
</dbReference>
<dbReference type="GO" id="GO:0070402">
    <property type="term" value="F:NADPH binding"/>
    <property type="evidence" value="ECO:0007669"/>
    <property type="project" value="TreeGrafter"/>
</dbReference>
<dbReference type="GO" id="GO:0050797">
    <property type="term" value="F:thymidylate synthase (FAD) activity"/>
    <property type="evidence" value="ECO:0007669"/>
    <property type="project" value="UniProtKB-UniRule"/>
</dbReference>
<dbReference type="GO" id="GO:0004799">
    <property type="term" value="F:thymidylate synthase activity"/>
    <property type="evidence" value="ECO:0007669"/>
    <property type="project" value="TreeGrafter"/>
</dbReference>
<dbReference type="GO" id="GO:0006231">
    <property type="term" value="P:dTMP biosynthetic process"/>
    <property type="evidence" value="ECO:0007669"/>
    <property type="project" value="UniProtKB-UniRule"/>
</dbReference>
<dbReference type="GO" id="GO:0006235">
    <property type="term" value="P:dTTP biosynthetic process"/>
    <property type="evidence" value="ECO:0007669"/>
    <property type="project" value="UniProtKB-UniRule"/>
</dbReference>
<dbReference type="GO" id="GO:0032259">
    <property type="term" value="P:methylation"/>
    <property type="evidence" value="ECO:0007669"/>
    <property type="project" value="UniProtKB-KW"/>
</dbReference>
<dbReference type="CDD" id="cd20175">
    <property type="entry name" value="ThyX"/>
    <property type="match status" value="1"/>
</dbReference>
<dbReference type="Gene3D" id="3.30.1360.170">
    <property type="match status" value="1"/>
</dbReference>
<dbReference type="HAMAP" id="MF_01408">
    <property type="entry name" value="ThyX"/>
    <property type="match status" value="1"/>
</dbReference>
<dbReference type="InterPro" id="IPR003669">
    <property type="entry name" value="Thymidylate_synthase_ThyX"/>
</dbReference>
<dbReference type="InterPro" id="IPR036098">
    <property type="entry name" value="Thymidylate_synthase_ThyX_sf"/>
</dbReference>
<dbReference type="NCBIfam" id="TIGR02170">
    <property type="entry name" value="thyX"/>
    <property type="match status" value="1"/>
</dbReference>
<dbReference type="PANTHER" id="PTHR34934">
    <property type="entry name" value="FLAVIN-DEPENDENT THYMIDYLATE SYNTHASE"/>
    <property type="match status" value="1"/>
</dbReference>
<dbReference type="PANTHER" id="PTHR34934:SF1">
    <property type="entry name" value="FLAVIN-DEPENDENT THYMIDYLATE SYNTHASE"/>
    <property type="match status" value="1"/>
</dbReference>
<dbReference type="Pfam" id="PF02511">
    <property type="entry name" value="Thy1"/>
    <property type="match status" value="1"/>
</dbReference>
<dbReference type="SUPFAM" id="SSF69796">
    <property type="entry name" value="Thymidylate synthase-complementing protein Thy1"/>
    <property type="match status" value="1"/>
</dbReference>
<dbReference type="PROSITE" id="PS51331">
    <property type="entry name" value="THYX"/>
    <property type="match status" value="1"/>
</dbReference>
<keyword id="KW-0274">FAD</keyword>
<keyword id="KW-0285">Flavoprotein</keyword>
<keyword id="KW-0489">Methyltransferase</keyword>
<keyword id="KW-0521">NADP</keyword>
<keyword id="KW-0545">Nucleotide biosynthesis</keyword>
<keyword id="KW-0808">Transferase</keyword>
<sequence length="229" mass="27389">MEFKVLDKGFLRLVDILGDDYSAVKAARVSYGKGIKTPEKDKNLIFYLMEHKHETPFEHIVFTFHVKTPIFVARQWFRHRIGSFNEASLRYTELKDEFYLPDHIRKNIVEDKQKAVRVEELKLKEQALELIYNSIEDSYKVYRKLLELGVAREMARIVLPMSSYTQFYWTVNARSLMNFLNLRADSHAQWEIQQYAIKIAKIFKEKCPWTFESFLKFNYRGDILREVEL</sequence>
<proteinExistence type="inferred from homology"/>
<accession>A6LP90</accession>
<name>THYX_THEM4</name>
<evidence type="ECO:0000255" key="1">
    <source>
        <dbReference type="HAMAP-Rule" id="MF_01408"/>
    </source>
</evidence>
<evidence type="ECO:0000255" key="2">
    <source>
        <dbReference type="PROSITE-ProRule" id="PRU00661"/>
    </source>
</evidence>
<organism>
    <name type="scientific">Thermosipho melanesiensis (strain DSM 12029 / CIP 104789 / BI429)</name>
    <dbReference type="NCBI Taxonomy" id="391009"/>
    <lineage>
        <taxon>Bacteria</taxon>
        <taxon>Thermotogati</taxon>
        <taxon>Thermotogota</taxon>
        <taxon>Thermotogae</taxon>
        <taxon>Thermotogales</taxon>
        <taxon>Fervidobacteriaceae</taxon>
        <taxon>Thermosipho</taxon>
    </lineage>
</organism>
<gene>
    <name evidence="1" type="primary">thyX</name>
    <name type="ordered locus">Tmel_1909</name>
</gene>
<comment type="function">
    <text evidence="1">Catalyzes the reductive methylation of 2'-deoxyuridine-5'-monophosphate (dUMP) to 2'-deoxythymidine-5'-monophosphate (dTMP) while utilizing 5,10-methylenetetrahydrofolate (mTHF) as the methyl donor, and NADPH and FADH(2) as the reductant.</text>
</comment>
<comment type="catalytic activity">
    <reaction evidence="1">
        <text>dUMP + (6R)-5,10-methylene-5,6,7,8-tetrahydrofolate + NADPH + H(+) = dTMP + (6S)-5,6,7,8-tetrahydrofolate + NADP(+)</text>
        <dbReference type="Rhea" id="RHEA:29043"/>
        <dbReference type="ChEBI" id="CHEBI:15378"/>
        <dbReference type="ChEBI" id="CHEBI:15636"/>
        <dbReference type="ChEBI" id="CHEBI:57453"/>
        <dbReference type="ChEBI" id="CHEBI:57783"/>
        <dbReference type="ChEBI" id="CHEBI:58349"/>
        <dbReference type="ChEBI" id="CHEBI:63528"/>
        <dbReference type="ChEBI" id="CHEBI:246422"/>
        <dbReference type="EC" id="2.1.1.148"/>
    </reaction>
</comment>
<comment type="cofactor">
    <cofactor evidence="1">
        <name>FAD</name>
        <dbReference type="ChEBI" id="CHEBI:57692"/>
    </cofactor>
    <text evidence="1">Binds 4 FAD per tetramer. Each FAD binding site is formed by three monomers.</text>
</comment>
<comment type="pathway">
    <text evidence="1">Pyrimidine metabolism; dTTP biosynthesis.</text>
</comment>
<comment type="subunit">
    <text evidence="1">Homotetramer.</text>
</comment>
<comment type="similarity">
    <text evidence="1">Belongs to the thymidylate synthase ThyX family.</text>
</comment>
<protein>
    <recommendedName>
        <fullName evidence="1">Flavin-dependent thymidylate synthase</fullName>
        <shortName evidence="1">FDTS</shortName>
        <ecNumber evidence="1">2.1.1.148</ecNumber>
    </recommendedName>
    <alternativeName>
        <fullName evidence="1">FAD-dependent thymidylate synthase</fullName>
    </alternativeName>
    <alternativeName>
        <fullName evidence="1">Thymidylate synthase ThyX</fullName>
        <shortName evidence="1">TS</shortName>
        <shortName evidence="1">TSase</shortName>
    </alternativeName>
</protein>
<reference key="1">
    <citation type="submission" date="2007-05" db="EMBL/GenBank/DDBJ databases">
        <title>Complete sequence of Thermosipho melanesiensis BI429.</title>
        <authorList>
            <consortium name="US DOE Joint Genome Institute"/>
            <person name="Copeland A."/>
            <person name="Lucas S."/>
            <person name="Lapidus A."/>
            <person name="Barry K."/>
            <person name="Glavina del Rio T."/>
            <person name="Dalin E."/>
            <person name="Tice H."/>
            <person name="Pitluck S."/>
            <person name="Chertkov O."/>
            <person name="Brettin T."/>
            <person name="Bruce D."/>
            <person name="Detter J.C."/>
            <person name="Han C."/>
            <person name="Schmutz J."/>
            <person name="Larimer F."/>
            <person name="Land M."/>
            <person name="Hauser L."/>
            <person name="Kyrpides N."/>
            <person name="Mikhailova N."/>
            <person name="Nelson K."/>
            <person name="Gogarten J.P."/>
            <person name="Noll K."/>
            <person name="Richardson P."/>
        </authorList>
    </citation>
    <scope>NUCLEOTIDE SEQUENCE [LARGE SCALE GENOMIC DNA]</scope>
    <source>
        <strain>DSM 12029 / CIP 104789 / BI429</strain>
    </source>
</reference>
<feature type="chain" id="PRO_1000184603" description="Flavin-dependent thymidylate synthase">
    <location>
        <begin position="1"/>
        <end position="229"/>
    </location>
</feature>
<feature type="domain" description="ThyX" evidence="2">
    <location>
        <begin position="1"/>
        <end position="217"/>
    </location>
</feature>
<feature type="short sequence motif" description="ThyX motif" evidence="1">
    <location>
        <begin position="78"/>
        <end position="88"/>
    </location>
</feature>
<feature type="active site" description="Involved in ionization of N3 of dUMP, leading to its activation" evidence="1">
    <location>
        <position position="183"/>
    </location>
</feature>
<feature type="binding site" evidence="1">
    <location>
        <position position="55"/>
    </location>
    <ligand>
        <name>FAD</name>
        <dbReference type="ChEBI" id="CHEBI:57692"/>
        <note>ligand shared between neighboring subunits</note>
    </ligand>
</feature>
<feature type="binding site" evidence="1">
    <location>
        <begin position="75"/>
        <end position="78"/>
    </location>
    <ligand>
        <name>dUMP</name>
        <dbReference type="ChEBI" id="CHEBI:246422"/>
        <note>ligand shared between dimeric partners</note>
    </ligand>
</feature>
<feature type="binding site" evidence="1">
    <location>
        <begin position="78"/>
        <end position="80"/>
    </location>
    <ligand>
        <name>FAD</name>
        <dbReference type="ChEBI" id="CHEBI:57692"/>
        <note>ligand shared between neighboring subunits</note>
    </ligand>
</feature>
<feature type="binding site" description="in other chain" evidence="1">
    <location>
        <begin position="86"/>
        <end position="90"/>
    </location>
    <ligand>
        <name>dUMP</name>
        <dbReference type="ChEBI" id="CHEBI:246422"/>
        <note>ligand shared between dimeric partners</note>
    </ligand>
</feature>
<feature type="binding site" evidence="1">
    <location>
        <position position="86"/>
    </location>
    <ligand>
        <name>FAD</name>
        <dbReference type="ChEBI" id="CHEBI:57692"/>
        <note>ligand shared between neighboring subunits</note>
    </ligand>
</feature>
<feature type="binding site" description="in other chain" evidence="1">
    <location>
        <position position="156"/>
    </location>
    <ligand>
        <name>dUMP</name>
        <dbReference type="ChEBI" id="CHEBI:246422"/>
        <note>ligand shared between dimeric partners</note>
    </ligand>
</feature>
<feature type="binding site" evidence="1">
    <location>
        <begin position="172"/>
        <end position="174"/>
    </location>
    <ligand>
        <name>FAD</name>
        <dbReference type="ChEBI" id="CHEBI:57692"/>
        <note>ligand shared between neighboring subunits</note>
    </ligand>
</feature>
<feature type="binding site" evidence="1">
    <location>
        <position position="178"/>
    </location>
    <ligand>
        <name>FAD</name>
        <dbReference type="ChEBI" id="CHEBI:57692"/>
        <note>ligand shared between neighboring subunits</note>
    </ligand>
</feature>
<feature type="binding site" evidence="1">
    <location>
        <position position="183"/>
    </location>
    <ligand>
        <name>dUMP</name>
        <dbReference type="ChEBI" id="CHEBI:246422"/>
        <note>ligand shared between dimeric partners</note>
    </ligand>
</feature>